<gene>
    <name evidence="1" type="primary">rpl33</name>
</gene>
<sequence>MAKSKDVRVTIILECTSCVRNGVNKESTGISRYITQKNRHNTPSRLELKKFCPYCYKHTIHGEIKK</sequence>
<keyword id="KW-0150">Chloroplast</keyword>
<keyword id="KW-0934">Plastid</keyword>
<keyword id="KW-0687">Ribonucleoprotein</keyword>
<keyword id="KW-0689">Ribosomal protein</keyword>
<reference key="1">
    <citation type="journal article" date="2006" name="Genes Genet. Syst.">
        <title>Complete nucleotide sequence of the cotton (Gossypium barbadense L.) chloroplast genome with a comparative analysis of sequences among 9 dicot plants.</title>
        <authorList>
            <person name="Ibrahim R.I.H."/>
            <person name="Azuma J."/>
            <person name="Sakamoto M."/>
        </authorList>
    </citation>
    <scope>NUCLEOTIDE SEQUENCE [LARGE SCALE GENOMIC DNA]</scope>
</reference>
<dbReference type="EMBL" id="AP009123">
    <property type="protein sequence ID" value="BAF41268.1"/>
    <property type="molecule type" value="Genomic_DNA"/>
</dbReference>
<dbReference type="RefSeq" id="YP_913208.1">
    <property type="nucleotide sequence ID" value="NC_008641.1"/>
</dbReference>
<dbReference type="GeneID" id="4575242"/>
<dbReference type="OrthoDB" id="361870at2759"/>
<dbReference type="GO" id="GO:0009507">
    <property type="term" value="C:chloroplast"/>
    <property type="evidence" value="ECO:0007669"/>
    <property type="project" value="UniProtKB-SubCell"/>
</dbReference>
<dbReference type="GO" id="GO:1990904">
    <property type="term" value="C:ribonucleoprotein complex"/>
    <property type="evidence" value="ECO:0007669"/>
    <property type="project" value="UniProtKB-KW"/>
</dbReference>
<dbReference type="GO" id="GO:0005840">
    <property type="term" value="C:ribosome"/>
    <property type="evidence" value="ECO:0007669"/>
    <property type="project" value="UniProtKB-KW"/>
</dbReference>
<dbReference type="GO" id="GO:0003735">
    <property type="term" value="F:structural constituent of ribosome"/>
    <property type="evidence" value="ECO:0007669"/>
    <property type="project" value="InterPro"/>
</dbReference>
<dbReference type="GO" id="GO:0006412">
    <property type="term" value="P:translation"/>
    <property type="evidence" value="ECO:0007669"/>
    <property type="project" value="UniProtKB-UniRule"/>
</dbReference>
<dbReference type="Gene3D" id="2.20.28.120">
    <property type="entry name" value="Ribosomal protein L33"/>
    <property type="match status" value="1"/>
</dbReference>
<dbReference type="HAMAP" id="MF_00294">
    <property type="entry name" value="Ribosomal_bL33"/>
    <property type="match status" value="1"/>
</dbReference>
<dbReference type="InterPro" id="IPR001705">
    <property type="entry name" value="Ribosomal_bL33"/>
</dbReference>
<dbReference type="InterPro" id="IPR018264">
    <property type="entry name" value="Ribosomal_bL33_CS"/>
</dbReference>
<dbReference type="InterPro" id="IPR038584">
    <property type="entry name" value="Ribosomal_bL33_sf"/>
</dbReference>
<dbReference type="InterPro" id="IPR011332">
    <property type="entry name" value="Ribosomal_zn-bd"/>
</dbReference>
<dbReference type="NCBIfam" id="NF001764">
    <property type="entry name" value="PRK00504.1"/>
    <property type="match status" value="1"/>
</dbReference>
<dbReference type="NCBIfam" id="NF001860">
    <property type="entry name" value="PRK00595.1"/>
    <property type="match status" value="1"/>
</dbReference>
<dbReference type="NCBIfam" id="TIGR01023">
    <property type="entry name" value="rpmG_bact"/>
    <property type="match status" value="1"/>
</dbReference>
<dbReference type="PANTHER" id="PTHR43168">
    <property type="entry name" value="50S RIBOSOMAL PROTEIN L33, CHLOROPLASTIC"/>
    <property type="match status" value="1"/>
</dbReference>
<dbReference type="PANTHER" id="PTHR43168:SF2">
    <property type="entry name" value="LARGE RIBOSOMAL SUBUNIT PROTEIN BL33C"/>
    <property type="match status" value="1"/>
</dbReference>
<dbReference type="Pfam" id="PF00471">
    <property type="entry name" value="Ribosomal_L33"/>
    <property type="match status" value="1"/>
</dbReference>
<dbReference type="SUPFAM" id="SSF57829">
    <property type="entry name" value="Zn-binding ribosomal proteins"/>
    <property type="match status" value="1"/>
</dbReference>
<dbReference type="PROSITE" id="PS00582">
    <property type="entry name" value="RIBOSOMAL_L33"/>
    <property type="match status" value="1"/>
</dbReference>
<proteinExistence type="inferred from homology"/>
<feature type="chain" id="PRO_0000276503" description="Large ribosomal subunit protein bL33c">
    <location>
        <begin position="1"/>
        <end position="66"/>
    </location>
</feature>
<comment type="subcellular location">
    <subcellularLocation>
        <location>Plastid</location>
        <location>Chloroplast</location>
    </subcellularLocation>
</comment>
<comment type="similarity">
    <text evidence="1">Belongs to the bacterial ribosomal protein bL33 family.</text>
</comment>
<protein>
    <recommendedName>
        <fullName evidence="1">Large ribosomal subunit protein bL33c</fullName>
    </recommendedName>
    <alternativeName>
        <fullName evidence="2">50S ribosomal protein L33, chloroplastic</fullName>
    </alternativeName>
</protein>
<accession>A0ZZ56</accession>
<geneLocation type="chloroplast"/>
<name>RK33_GOSBA</name>
<evidence type="ECO:0000255" key="1">
    <source>
        <dbReference type="HAMAP-Rule" id="MF_00294"/>
    </source>
</evidence>
<evidence type="ECO:0000305" key="2"/>
<organism>
    <name type="scientific">Gossypium barbadense</name>
    <name type="common">Sea Island cotton</name>
    <name type="synonym">Hibiscus barbadensis</name>
    <dbReference type="NCBI Taxonomy" id="3634"/>
    <lineage>
        <taxon>Eukaryota</taxon>
        <taxon>Viridiplantae</taxon>
        <taxon>Streptophyta</taxon>
        <taxon>Embryophyta</taxon>
        <taxon>Tracheophyta</taxon>
        <taxon>Spermatophyta</taxon>
        <taxon>Magnoliopsida</taxon>
        <taxon>eudicotyledons</taxon>
        <taxon>Gunneridae</taxon>
        <taxon>Pentapetalae</taxon>
        <taxon>rosids</taxon>
        <taxon>malvids</taxon>
        <taxon>Malvales</taxon>
        <taxon>Malvaceae</taxon>
        <taxon>Malvoideae</taxon>
        <taxon>Gossypium</taxon>
    </lineage>
</organism>